<gene>
    <name type="ordered locus">MT2260</name>
</gene>
<reference key="1">
    <citation type="journal article" date="2002" name="J. Bacteriol.">
        <title>Whole-genome comparison of Mycobacterium tuberculosis clinical and laboratory strains.</title>
        <authorList>
            <person name="Fleischmann R.D."/>
            <person name="Alland D."/>
            <person name="Eisen J.A."/>
            <person name="Carpenter L."/>
            <person name="White O."/>
            <person name="Peterson J.D."/>
            <person name="DeBoy R.T."/>
            <person name="Dodson R.J."/>
            <person name="Gwinn M.L."/>
            <person name="Haft D.H."/>
            <person name="Hickey E.K."/>
            <person name="Kolonay J.F."/>
            <person name="Nelson W.C."/>
            <person name="Umayam L.A."/>
            <person name="Ermolaeva M.D."/>
            <person name="Salzberg S.L."/>
            <person name="Delcher A."/>
            <person name="Utterback T.R."/>
            <person name="Weidman J.F."/>
            <person name="Khouri H.M."/>
            <person name="Gill J."/>
            <person name="Mikula A."/>
            <person name="Bishai W."/>
            <person name="Jacobs W.R. Jr."/>
            <person name="Venter J.C."/>
            <person name="Fraser C.M."/>
        </authorList>
    </citation>
    <scope>NUCLEOTIDE SEQUENCE [LARGE SCALE GENOMIC DNA]</scope>
    <source>
        <strain>CDC 1551 / Oshkosh</strain>
    </source>
</reference>
<comment type="similarity">
    <text evidence="1">Belongs to the HesB/IscA family.</text>
</comment>
<organism>
    <name type="scientific">Mycobacterium tuberculosis (strain CDC 1551 / Oshkosh)</name>
    <dbReference type="NCBI Taxonomy" id="83331"/>
    <lineage>
        <taxon>Bacteria</taxon>
        <taxon>Bacillati</taxon>
        <taxon>Actinomycetota</taxon>
        <taxon>Actinomycetes</taxon>
        <taxon>Mycobacteriales</taxon>
        <taxon>Mycobacteriaceae</taxon>
        <taxon>Mycobacterium</taxon>
        <taxon>Mycobacterium tuberculosis complex</taxon>
    </lineage>
</organism>
<sequence>MTVQNEPSAKTHGVILTEAAAAKAKSLLDQEGRDDLALRIAVQPGGCAGLRYNLFFDDRTLDGDQTAEFGGVRLIVDRMSAPYVEGASIDFVDTIEKQGFTIDNPNATGSCACGDSFN</sequence>
<dbReference type="EMBL" id="AE000516">
    <property type="protein sequence ID" value="AAK46546.1"/>
    <property type="molecule type" value="Genomic_DNA"/>
</dbReference>
<dbReference type="PIR" id="E70785">
    <property type="entry name" value="E70785"/>
</dbReference>
<dbReference type="RefSeq" id="WP_003411418.1">
    <property type="nucleotide sequence ID" value="NZ_KK341227.1"/>
</dbReference>
<dbReference type="SMR" id="P9WMN4"/>
<dbReference type="KEGG" id="mtc:MT2260"/>
<dbReference type="PATRIC" id="fig|83331.31.peg.2435"/>
<dbReference type="HOGENOM" id="CLU_069054_5_0_11"/>
<dbReference type="Proteomes" id="UP000001020">
    <property type="component" value="Chromosome"/>
</dbReference>
<dbReference type="GO" id="GO:0051537">
    <property type="term" value="F:2 iron, 2 sulfur cluster binding"/>
    <property type="evidence" value="ECO:0007669"/>
    <property type="project" value="TreeGrafter"/>
</dbReference>
<dbReference type="GO" id="GO:0051539">
    <property type="term" value="F:4 iron, 4 sulfur cluster binding"/>
    <property type="evidence" value="ECO:0007669"/>
    <property type="project" value="TreeGrafter"/>
</dbReference>
<dbReference type="GO" id="GO:0005506">
    <property type="term" value="F:iron ion binding"/>
    <property type="evidence" value="ECO:0007669"/>
    <property type="project" value="TreeGrafter"/>
</dbReference>
<dbReference type="GO" id="GO:0016226">
    <property type="term" value="P:iron-sulfur cluster assembly"/>
    <property type="evidence" value="ECO:0007669"/>
    <property type="project" value="InterPro"/>
</dbReference>
<dbReference type="FunFam" id="2.60.300.12:FF:000003">
    <property type="entry name" value="Iron-sulfur cluster insertion protein ErpA"/>
    <property type="match status" value="1"/>
</dbReference>
<dbReference type="Gene3D" id="2.60.300.12">
    <property type="entry name" value="HesB-like domain"/>
    <property type="match status" value="1"/>
</dbReference>
<dbReference type="InterPro" id="IPR000361">
    <property type="entry name" value="FeS_biogenesis"/>
</dbReference>
<dbReference type="InterPro" id="IPR016092">
    <property type="entry name" value="FeS_cluster_insertion"/>
</dbReference>
<dbReference type="InterPro" id="IPR017870">
    <property type="entry name" value="FeS_cluster_insertion_CS"/>
</dbReference>
<dbReference type="InterPro" id="IPR035903">
    <property type="entry name" value="HesB-like_dom_sf"/>
</dbReference>
<dbReference type="NCBIfam" id="TIGR00049">
    <property type="entry name" value="iron-sulfur cluster assembly accessory protein"/>
    <property type="match status" value="1"/>
</dbReference>
<dbReference type="PANTHER" id="PTHR43011">
    <property type="entry name" value="IRON-SULFUR CLUSTER ASSEMBLY 2 HOMOLOG, MITOCHONDRIAL"/>
    <property type="match status" value="1"/>
</dbReference>
<dbReference type="PANTHER" id="PTHR43011:SF1">
    <property type="entry name" value="IRON-SULFUR CLUSTER ASSEMBLY 2 HOMOLOG, MITOCHONDRIAL"/>
    <property type="match status" value="1"/>
</dbReference>
<dbReference type="Pfam" id="PF01521">
    <property type="entry name" value="Fe-S_biosyn"/>
    <property type="match status" value="1"/>
</dbReference>
<dbReference type="SUPFAM" id="SSF89360">
    <property type="entry name" value="HesB-like domain"/>
    <property type="match status" value="1"/>
</dbReference>
<dbReference type="PROSITE" id="PS01152">
    <property type="entry name" value="HESB"/>
    <property type="match status" value="1"/>
</dbReference>
<feature type="chain" id="PRO_0000427273" description="Protein MT2260">
    <location>
        <begin position="1"/>
        <end position="118"/>
    </location>
</feature>
<name>Y2204_MYCTO</name>
<proteinExistence type="inferred from homology"/>
<evidence type="ECO:0000305" key="1"/>
<accession>P9WMN4</accession>
<accession>L0TBT4</accession>
<accession>P0A5A9</accession>
<accession>Q10393</accession>
<keyword id="KW-1185">Reference proteome</keyword>
<protein>
    <recommendedName>
        <fullName>Protein MT2260</fullName>
    </recommendedName>
</protein>